<dbReference type="SMR" id="P84638"/>
<dbReference type="GO" id="GO:0006952">
    <property type="term" value="P:defense response"/>
    <property type="evidence" value="ECO:0000314"/>
    <property type="project" value="UniProtKB"/>
</dbReference>
<dbReference type="GO" id="GO:0050688">
    <property type="term" value="P:regulation of defense response to virus"/>
    <property type="evidence" value="ECO:0007669"/>
    <property type="project" value="UniProtKB-KW"/>
</dbReference>
<dbReference type="InterPro" id="IPR005535">
    <property type="entry name" value="Cyclotide"/>
</dbReference>
<dbReference type="InterPro" id="IPR036146">
    <property type="entry name" value="Cyclotide_sf"/>
</dbReference>
<dbReference type="Pfam" id="PF03784">
    <property type="entry name" value="Cyclotide"/>
    <property type="match status" value="1"/>
</dbReference>
<dbReference type="PIRSF" id="PIRSF037891">
    <property type="entry name" value="Cycloviolacin"/>
    <property type="match status" value="1"/>
</dbReference>
<dbReference type="SUPFAM" id="SSF57038">
    <property type="entry name" value="Cyclotides"/>
    <property type="match status" value="1"/>
</dbReference>
<dbReference type="PROSITE" id="PS51052">
    <property type="entry name" value="CYCLOTIDE"/>
    <property type="match status" value="1"/>
</dbReference>
<organism>
    <name type="scientific">Leonia cymosa</name>
    <name type="common">Sacha uba</name>
    <dbReference type="NCBI Taxonomy" id="341676"/>
    <lineage>
        <taxon>Eukaryota</taxon>
        <taxon>Viridiplantae</taxon>
        <taxon>Streptophyta</taxon>
        <taxon>Embryophyta</taxon>
        <taxon>Tracheophyta</taxon>
        <taxon>Spermatophyta</taxon>
        <taxon>Magnoliopsida</taxon>
        <taxon>eudicotyledons</taxon>
        <taxon>Gunneridae</taxon>
        <taxon>Pentapetalae</taxon>
        <taxon>rosids</taxon>
        <taxon>fabids</taxon>
        <taxon>Malpighiales</taxon>
        <taxon>Violaceae</taxon>
        <taxon>Leonia</taxon>
    </lineage>
</organism>
<reference evidence="4" key="1">
    <citation type="journal article" date="2000" name="J. Org. Chem.">
        <title>Cycloviolins A-D, anti-HIV macrocyclic peptides from Leonia cymosa.</title>
        <authorList>
            <person name="Hallock Y.F."/>
            <person name="Sowder R.C. II"/>
            <person name="Pannell L.K."/>
            <person name="Hughes C.B."/>
            <person name="Johnson D.G."/>
            <person name="Gulakowski R."/>
            <person name="Cardellina J.H. Jr."/>
            <person name="Boyd M.R."/>
        </authorList>
    </citation>
    <scope>PROTEIN SEQUENCE</scope>
    <scope>FUNCTION</scope>
    <scope>MASS SPECTROMETRY</scope>
    <source>
        <strain evidence="3">Q65T-5650</strain>
        <tissue evidence="3">Bark</tissue>
    </source>
</reference>
<evidence type="ECO:0000250" key="1">
    <source>
        <dbReference type="UniProtKB" id="P56879"/>
    </source>
</evidence>
<evidence type="ECO:0000255" key="2">
    <source>
        <dbReference type="PROSITE-ProRule" id="PRU00395"/>
    </source>
</evidence>
<evidence type="ECO:0000269" key="3">
    <source>
    </source>
</evidence>
<evidence type="ECO:0000305" key="4"/>
<feature type="peptide" id="PRO_0000043604" description="Cycloviolin-B" evidence="2 3">
    <location>
        <begin position="1"/>
        <end position="28"/>
    </location>
</feature>
<feature type="disulfide bond" evidence="1 2">
    <location>
        <begin position="4"/>
        <end position="18"/>
    </location>
</feature>
<feature type="disulfide bond" evidence="1 2">
    <location>
        <begin position="8"/>
        <end position="20"/>
    </location>
</feature>
<feature type="disulfide bond" evidence="1 2">
    <location>
        <begin position="13"/>
        <end position="25"/>
    </location>
</feature>
<feature type="cross-link" description="Cyclopeptide (Gly-Asn)" evidence="3">
    <location>
        <begin position="1"/>
        <end position="28"/>
    </location>
</feature>
<name>CYVB_LEOCM</name>
<accession>P84638</accession>
<comment type="function">
    <text evidence="2 3 4">Probably participates in a plant defense mechanism. Has anti-HIV activity.</text>
</comment>
<comment type="domain">
    <text evidence="1">The presence of a 'disulfide through disulfide knot' structurally defines this protein as a knottin.</text>
</comment>
<comment type="PTM">
    <text evidence="2 3">This is a cyclic peptide.</text>
</comment>
<comment type="mass spectrometry"/>
<comment type="similarity">
    <text evidence="2">Belongs to the cyclotide family.</text>
</comment>
<comment type="caution">
    <text evidence="4">This peptide is cyclic. The start position was chosen by similarity to OAK1 (kalata-B1) for which the DNA sequence is known.</text>
</comment>
<keyword id="KW-0930">Antiviral protein</keyword>
<keyword id="KW-0903">Direct protein sequencing</keyword>
<keyword id="KW-1015">Disulfide bond</keyword>
<keyword id="KW-0960">Knottin</keyword>
<keyword id="KW-0611">Plant defense</keyword>
<proteinExistence type="evidence at protein level"/>
<protein>
    <recommendedName>
        <fullName>Cycloviolin-B</fullName>
    </recommendedName>
</protein>
<sequence>GTACGESCYVLPCFTVGCTCTSSQCFKN</sequence>